<evidence type="ECO:0000255" key="1">
    <source>
        <dbReference type="HAMAP-Rule" id="MF_01328"/>
    </source>
</evidence>
<evidence type="ECO:0000256" key="2">
    <source>
        <dbReference type="SAM" id="MobiDB-lite"/>
    </source>
</evidence>
<evidence type="ECO:0000305" key="3"/>
<proteinExistence type="inferred from homology"/>
<keyword id="KW-0687">Ribonucleoprotein</keyword>
<keyword id="KW-0689">Ribosomal protein</keyword>
<keyword id="KW-0694">RNA-binding</keyword>
<keyword id="KW-0699">rRNA-binding</keyword>
<reference key="1">
    <citation type="submission" date="2005-10" db="EMBL/GenBank/DDBJ databases">
        <title>Complete sequence of chromosome 1 of Burkholderia sp. 383.</title>
        <authorList>
            <consortium name="US DOE Joint Genome Institute"/>
            <person name="Copeland A."/>
            <person name="Lucas S."/>
            <person name="Lapidus A."/>
            <person name="Barry K."/>
            <person name="Detter J.C."/>
            <person name="Glavina T."/>
            <person name="Hammon N."/>
            <person name="Israni S."/>
            <person name="Pitluck S."/>
            <person name="Chain P."/>
            <person name="Malfatti S."/>
            <person name="Shin M."/>
            <person name="Vergez L."/>
            <person name="Schmutz J."/>
            <person name="Larimer F."/>
            <person name="Land M."/>
            <person name="Kyrpides N."/>
            <person name="Lykidis A."/>
            <person name="Richardson P."/>
        </authorList>
    </citation>
    <scope>NUCLEOTIDE SEQUENCE [LARGE SCALE GENOMIC DNA]</scope>
    <source>
        <strain>ATCC 17760 / DSM 23089 / LMG 22485 / NCIMB 9086 / R18194 / 383</strain>
    </source>
</reference>
<comment type="function">
    <text evidence="1">One of the primary rRNA binding proteins, this protein initially binds near the 5'-end of the 23S rRNA. It is important during the early stages of 50S assembly. It makes multiple contacts with different domains of the 23S rRNA in the assembled 50S subunit and ribosome.</text>
</comment>
<comment type="function">
    <text evidence="1">Forms part of the polypeptide exit tunnel.</text>
</comment>
<comment type="subunit">
    <text evidence="1">Part of the 50S ribosomal subunit.</text>
</comment>
<comment type="similarity">
    <text evidence="1">Belongs to the universal ribosomal protein uL4 family.</text>
</comment>
<gene>
    <name evidence="1" type="primary">rplD</name>
    <name type="ordered locus">Bcep18194_A3448</name>
</gene>
<sequence length="206" mass="23008">MELKLLNENGQEGAVVNASDVVFGRDYNEALIHQVVVAYQANARQGNRAQKDREQVKHTTKKPWRQKGTGRARAGMSSSPLWRGGGRIFPNSPEENFSHKVNKKMHRAGLCSIFSQLAREGRLSVVEDIILEAPKTKLLAEKFKTMGLDSVLIITDTVDENLYLASRNLPHVAIVEPRYADPLSLIYFKKVLVTKAAVAQIEELLS</sequence>
<dbReference type="EMBL" id="CP000151">
    <property type="protein sequence ID" value="ABB07050.1"/>
    <property type="molecule type" value="Genomic_DNA"/>
</dbReference>
<dbReference type="RefSeq" id="WP_011350675.1">
    <property type="nucleotide sequence ID" value="NZ_WNDV01000034.1"/>
</dbReference>
<dbReference type="SMR" id="Q39KG6"/>
<dbReference type="GeneID" id="93193450"/>
<dbReference type="KEGG" id="bur:Bcep18194_A3448"/>
<dbReference type="HOGENOM" id="CLU_041575_5_2_4"/>
<dbReference type="Proteomes" id="UP000002705">
    <property type="component" value="Chromosome 1"/>
</dbReference>
<dbReference type="GO" id="GO:1990904">
    <property type="term" value="C:ribonucleoprotein complex"/>
    <property type="evidence" value="ECO:0007669"/>
    <property type="project" value="UniProtKB-KW"/>
</dbReference>
<dbReference type="GO" id="GO:0005840">
    <property type="term" value="C:ribosome"/>
    <property type="evidence" value="ECO:0007669"/>
    <property type="project" value="UniProtKB-KW"/>
</dbReference>
<dbReference type="GO" id="GO:0019843">
    <property type="term" value="F:rRNA binding"/>
    <property type="evidence" value="ECO:0007669"/>
    <property type="project" value="UniProtKB-UniRule"/>
</dbReference>
<dbReference type="GO" id="GO:0003735">
    <property type="term" value="F:structural constituent of ribosome"/>
    <property type="evidence" value="ECO:0007669"/>
    <property type="project" value="InterPro"/>
</dbReference>
<dbReference type="GO" id="GO:0006412">
    <property type="term" value="P:translation"/>
    <property type="evidence" value="ECO:0007669"/>
    <property type="project" value="UniProtKB-UniRule"/>
</dbReference>
<dbReference type="Gene3D" id="3.40.1370.10">
    <property type="match status" value="1"/>
</dbReference>
<dbReference type="HAMAP" id="MF_01328_B">
    <property type="entry name" value="Ribosomal_uL4_B"/>
    <property type="match status" value="1"/>
</dbReference>
<dbReference type="InterPro" id="IPR002136">
    <property type="entry name" value="Ribosomal_uL4"/>
</dbReference>
<dbReference type="InterPro" id="IPR013005">
    <property type="entry name" value="Ribosomal_uL4-like"/>
</dbReference>
<dbReference type="InterPro" id="IPR023574">
    <property type="entry name" value="Ribosomal_uL4_dom_sf"/>
</dbReference>
<dbReference type="NCBIfam" id="TIGR03953">
    <property type="entry name" value="rplD_bact"/>
    <property type="match status" value="1"/>
</dbReference>
<dbReference type="PANTHER" id="PTHR10746">
    <property type="entry name" value="50S RIBOSOMAL PROTEIN L4"/>
    <property type="match status" value="1"/>
</dbReference>
<dbReference type="PANTHER" id="PTHR10746:SF6">
    <property type="entry name" value="LARGE RIBOSOMAL SUBUNIT PROTEIN UL4M"/>
    <property type="match status" value="1"/>
</dbReference>
<dbReference type="Pfam" id="PF00573">
    <property type="entry name" value="Ribosomal_L4"/>
    <property type="match status" value="1"/>
</dbReference>
<dbReference type="SUPFAM" id="SSF52166">
    <property type="entry name" value="Ribosomal protein L4"/>
    <property type="match status" value="1"/>
</dbReference>
<accession>Q39KG6</accession>
<organism>
    <name type="scientific">Burkholderia lata (strain ATCC 17760 / DSM 23089 / LMG 22485 / NCIMB 9086 / R18194 / 383)</name>
    <dbReference type="NCBI Taxonomy" id="482957"/>
    <lineage>
        <taxon>Bacteria</taxon>
        <taxon>Pseudomonadati</taxon>
        <taxon>Pseudomonadota</taxon>
        <taxon>Betaproteobacteria</taxon>
        <taxon>Burkholderiales</taxon>
        <taxon>Burkholderiaceae</taxon>
        <taxon>Burkholderia</taxon>
        <taxon>Burkholderia cepacia complex</taxon>
    </lineage>
</organism>
<protein>
    <recommendedName>
        <fullName evidence="1">Large ribosomal subunit protein uL4</fullName>
    </recommendedName>
    <alternativeName>
        <fullName evidence="3">50S ribosomal protein L4</fullName>
    </alternativeName>
</protein>
<feature type="chain" id="PRO_0000242354" description="Large ribosomal subunit protein uL4">
    <location>
        <begin position="1"/>
        <end position="206"/>
    </location>
</feature>
<feature type="region of interest" description="Disordered" evidence="2">
    <location>
        <begin position="46"/>
        <end position="78"/>
    </location>
</feature>
<feature type="compositionally biased region" description="Basic residues" evidence="2">
    <location>
        <begin position="58"/>
        <end position="70"/>
    </location>
</feature>
<name>RL4_BURL3</name>